<name>RISB_STAHJ</name>
<feature type="chain" id="PRO_1000040524" description="6,7-dimethyl-8-ribityllumazine synthase">
    <location>
        <begin position="1"/>
        <end position="152"/>
    </location>
</feature>
<feature type="active site" description="Proton donor" evidence="1">
    <location>
        <position position="87"/>
    </location>
</feature>
<feature type="binding site" evidence="1">
    <location>
        <position position="21"/>
    </location>
    <ligand>
        <name>5-amino-6-(D-ribitylamino)uracil</name>
        <dbReference type="ChEBI" id="CHEBI:15934"/>
    </ligand>
</feature>
<feature type="binding site" evidence="1">
    <location>
        <begin position="55"/>
        <end position="57"/>
    </location>
    <ligand>
        <name>5-amino-6-(D-ribitylamino)uracil</name>
        <dbReference type="ChEBI" id="CHEBI:15934"/>
    </ligand>
</feature>
<feature type="binding site" evidence="1">
    <location>
        <begin position="79"/>
        <end position="81"/>
    </location>
    <ligand>
        <name>5-amino-6-(D-ribitylamino)uracil</name>
        <dbReference type="ChEBI" id="CHEBI:15934"/>
    </ligand>
</feature>
<feature type="binding site" evidence="1">
    <location>
        <begin position="84"/>
        <end position="85"/>
    </location>
    <ligand>
        <name>(2S)-2-hydroxy-3-oxobutyl phosphate</name>
        <dbReference type="ChEBI" id="CHEBI:58830"/>
    </ligand>
</feature>
<feature type="binding site" evidence="1">
    <location>
        <position position="112"/>
    </location>
    <ligand>
        <name>5-amino-6-(D-ribitylamino)uracil</name>
        <dbReference type="ChEBI" id="CHEBI:15934"/>
    </ligand>
</feature>
<feature type="binding site" evidence="1">
    <location>
        <position position="126"/>
    </location>
    <ligand>
        <name>(2S)-2-hydroxy-3-oxobutyl phosphate</name>
        <dbReference type="ChEBI" id="CHEBI:58830"/>
    </ligand>
</feature>
<comment type="function">
    <text evidence="1">Catalyzes the formation of 6,7-dimethyl-8-ribityllumazine by condensation of 5-amino-6-(D-ribitylamino)uracil with 3,4-dihydroxy-2-butanone 4-phosphate. This is the penultimate step in the biosynthesis of riboflavin.</text>
</comment>
<comment type="catalytic activity">
    <reaction evidence="1">
        <text>(2S)-2-hydroxy-3-oxobutyl phosphate + 5-amino-6-(D-ribitylamino)uracil = 6,7-dimethyl-8-(1-D-ribityl)lumazine + phosphate + 2 H2O + H(+)</text>
        <dbReference type="Rhea" id="RHEA:26152"/>
        <dbReference type="ChEBI" id="CHEBI:15377"/>
        <dbReference type="ChEBI" id="CHEBI:15378"/>
        <dbReference type="ChEBI" id="CHEBI:15934"/>
        <dbReference type="ChEBI" id="CHEBI:43474"/>
        <dbReference type="ChEBI" id="CHEBI:58201"/>
        <dbReference type="ChEBI" id="CHEBI:58830"/>
        <dbReference type="EC" id="2.5.1.78"/>
    </reaction>
</comment>
<comment type="pathway">
    <text evidence="1">Cofactor biosynthesis; riboflavin biosynthesis; riboflavin from 2-hydroxy-3-oxobutyl phosphate and 5-amino-6-(D-ribitylamino)uracil: step 1/2.</text>
</comment>
<comment type="subunit">
    <text evidence="1">Forms an icosahedral capsid composed of 60 subunits, arranged as a dodecamer of pentamers.</text>
</comment>
<comment type="similarity">
    <text evidence="1">Belongs to the DMRL synthase family.</text>
</comment>
<sequence length="152" mass="16234">MNFEGKLVGTDLKVAIVVSRFNDFITNRLLDGAKDTLVRHGVEDSNIDVAYVPGAFEIPLVSKKLAQKGEYDAVITLGCVIRGATSHYDYVCNEVAKGVSKANDVSDIPVIFGVLTTESIEQAVERAGTKAGNKGAEAAVSAIEMANLLKQF</sequence>
<protein>
    <recommendedName>
        <fullName evidence="1">6,7-dimethyl-8-ribityllumazine synthase</fullName>
        <shortName evidence="1">DMRL synthase</shortName>
        <shortName evidence="1">LS</shortName>
        <shortName evidence="1">Lumazine synthase</shortName>
        <ecNumber evidence="1">2.5.1.78</ecNumber>
    </recommendedName>
</protein>
<gene>
    <name evidence="1" type="primary">ribH</name>
    <name type="ordered locus">SH1156</name>
</gene>
<evidence type="ECO:0000255" key="1">
    <source>
        <dbReference type="HAMAP-Rule" id="MF_00178"/>
    </source>
</evidence>
<proteinExistence type="inferred from homology"/>
<organism>
    <name type="scientific">Staphylococcus haemolyticus (strain JCSC1435)</name>
    <dbReference type="NCBI Taxonomy" id="279808"/>
    <lineage>
        <taxon>Bacteria</taxon>
        <taxon>Bacillati</taxon>
        <taxon>Bacillota</taxon>
        <taxon>Bacilli</taxon>
        <taxon>Bacillales</taxon>
        <taxon>Staphylococcaceae</taxon>
        <taxon>Staphylococcus</taxon>
    </lineage>
</organism>
<accession>Q4L7B0</accession>
<dbReference type="EC" id="2.5.1.78" evidence="1"/>
<dbReference type="EMBL" id="AP006716">
    <property type="protein sequence ID" value="BAE04465.1"/>
    <property type="molecule type" value="Genomic_DNA"/>
</dbReference>
<dbReference type="SMR" id="Q4L7B0"/>
<dbReference type="KEGG" id="sha:SH1156"/>
<dbReference type="eggNOG" id="COG0054">
    <property type="taxonomic scope" value="Bacteria"/>
</dbReference>
<dbReference type="HOGENOM" id="CLU_089358_1_1_9"/>
<dbReference type="OrthoDB" id="9809709at2"/>
<dbReference type="UniPathway" id="UPA00275">
    <property type="reaction ID" value="UER00404"/>
</dbReference>
<dbReference type="Proteomes" id="UP000000543">
    <property type="component" value="Chromosome"/>
</dbReference>
<dbReference type="GO" id="GO:0005829">
    <property type="term" value="C:cytosol"/>
    <property type="evidence" value="ECO:0007669"/>
    <property type="project" value="TreeGrafter"/>
</dbReference>
<dbReference type="GO" id="GO:0009349">
    <property type="term" value="C:riboflavin synthase complex"/>
    <property type="evidence" value="ECO:0007669"/>
    <property type="project" value="InterPro"/>
</dbReference>
<dbReference type="GO" id="GO:0000906">
    <property type="term" value="F:6,7-dimethyl-8-ribityllumazine synthase activity"/>
    <property type="evidence" value="ECO:0007669"/>
    <property type="project" value="UniProtKB-UniRule"/>
</dbReference>
<dbReference type="GO" id="GO:0009231">
    <property type="term" value="P:riboflavin biosynthetic process"/>
    <property type="evidence" value="ECO:0007669"/>
    <property type="project" value="UniProtKB-UniRule"/>
</dbReference>
<dbReference type="CDD" id="cd09209">
    <property type="entry name" value="Lumazine_synthase-I"/>
    <property type="match status" value="1"/>
</dbReference>
<dbReference type="FunFam" id="3.40.50.960:FF:000001">
    <property type="entry name" value="6,7-dimethyl-8-ribityllumazine synthase"/>
    <property type="match status" value="1"/>
</dbReference>
<dbReference type="Gene3D" id="3.40.50.960">
    <property type="entry name" value="Lumazine/riboflavin synthase"/>
    <property type="match status" value="1"/>
</dbReference>
<dbReference type="HAMAP" id="MF_00178">
    <property type="entry name" value="Lumazine_synth"/>
    <property type="match status" value="1"/>
</dbReference>
<dbReference type="InterPro" id="IPR034964">
    <property type="entry name" value="LS"/>
</dbReference>
<dbReference type="InterPro" id="IPR002180">
    <property type="entry name" value="LS/RS"/>
</dbReference>
<dbReference type="InterPro" id="IPR036467">
    <property type="entry name" value="LS/RS_sf"/>
</dbReference>
<dbReference type="NCBIfam" id="TIGR00114">
    <property type="entry name" value="lumazine-synth"/>
    <property type="match status" value="1"/>
</dbReference>
<dbReference type="NCBIfam" id="NF000812">
    <property type="entry name" value="PRK00061.1-4"/>
    <property type="match status" value="1"/>
</dbReference>
<dbReference type="PANTHER" id="PTHR21058:SF0">
    <property type="entry name" value="6,7-DIMETHYL-8-RIBITYLLUMAZINE SYNTHASE"/>
    <property type="match status" value="1"/>
</dbReference>
<dbReference type="PANTHER" id="PTHR21058">
    <property type="entry name" value="6,7-DIMETHYL-8-RIBITYLLUMAZINE SYNTHASE DMRL SYNTHASE LUMAZINE SYNTHASE"/>
    <property type="match status" value="1"/>
</dbReference>
<dbReference type="Pfam" id="PF00885">
    <property type="entry name" value="DMRL_synthase"/>
    <property type="match status" value="1"/>
</dbReference>
<dbReference type="SUPFAM" id="SSF52121">
    <property type="entry name" value="Lumazine synthase"/>
    <property type="match status" value="1"/>
</dbReference>
<reference key="1">
    <citation type="journal article" date="2005" name="J. Bacteriol.">
        <title>Whole-genome sequencing of Staphylococcus haemolyticus uncovers the extreme plasticity of its genome and the evolution of human-colonizing staphylococcal species.</title>
        <authorList>
            <person name="Takeuchi F."/>
            <person name="Watanabe S."/>
            <person name="Baba T."/>
            <person name="Yuzawa H."/>
            <person name="Ito T."/>
            <person name="Morimoto Y."/>
            <person name="Kuroda M."/>
            <person name="Cui L."/>
            <person name="Takahashi M."/>
            <person name="Ankai A."/>
            <person name="Baba S."/>
            <person name="Fukui S."/>
            <person name="Lee J.C."/>
            <person name="Hiramatsu K."/>
        </authorList>
    </citation>
    <scope>NUCLEOTIDE SEQUENCE [LARGE SCALE GENOMIC DNA]</scope>
    <source>
        <strain>JCSC1435</strain>
    </source>
</reference>
<keyword id="KW-0686">Riboflavin biosynthesis</keyword>
<keyword id="KW-0808">Transferase</keyword>